<comment type="function">
    <text evidence="1">Required for correct translation termination and probably involved in regulation of hypoxic gene expression.</text>
</comment>
<comment type="subcellular location">
    <subcellularLocation>
        <location evidence="1">Nucleus</location>
    </subcellularLocation>
</comment>
<comment type="similarity">
    <text evidence="3">Belongs to the ETT1 family.</text>
</comment>
<name>ETT1_CLAL4</name>
<protein>
    <recommendedName>
        <fullName>Enhancer of translation termination 1</fullName>
    </recommendedName>
</protein>
<sequence length="426" mass="48294">MAPKRPLGIGKAAKAKKQKKESTENESVGETAASNELTVELDEEIEANDAVAQLKALWKTYFASEDKSELMLNGIIHECDRILRKTHNTKEQDEDDEKIELSGRFYAIYALALSSLAFYHTEDLKKVNDFFAEAFDRIESGRKAFPDSVDLAFAEAKIMISRIPLVEVSQLLVDSRVGKERSDVSKSLDASLAKWEEAQKQAVAQNHFHHYNAENFDFLQALDDLLDMVDNFGQEIMEGEDSDAEEDEKPHVELDEGHPLFAIKSSDKYNLWWREQTIAFLDHLNKNIENASAKELPALAVLKRELCKRLGQSYLMEAEVPANVFTTLSYYSKDAKSLNGLTRVEAQKISQDLFKRALTYLKQAQDEQEPETWVNVAEAMISLGNTYEIDSKEQEETYKEAEAILVKANNATNGKYEDILENLMQG</sequence>
<proteinExistence type="inferred from homology"/>
<feature type="chain" id="PRO_0000406615" description="Enhancer of translation termination 1">
    <location>
        <begin position="1"/>
        <end position="426"/>
    </location>
</feature>
<feature type="region of interest" description="Disordered" evidence="2">
    <location>
        <begin position="1"/>
        <end position="35"/>
    </location>
</feature>
<feature type="compositionally biased region" description="Polar residues" evidence="2">
    <location>
        <begin position="25"/>
        <end position="35"/>
    </location>
</feature>
<keyword id="KW-0539">Nucleus</keyword>
<keyword id="KW-1185">Reference proteome</keyword>
<keyword id="KW-0804">Transcription</keyword>
<keyword id="KW-0805">Transcription regulation</keyword>
<keyword id="KW-0810">Translation regulation</keyword>
<dbReference type="EMBL" id="CH408082">
    <property type="protein sequence ID" value="EEQ41410.1"/>
    <property type="molecule type" value="Genomic_DNA"/>
</dbReference>
<dbReference type="RefSeq" id="XP_002614760.1">
    <property type="nucleotide sequence ID" value="XM_002614714.1"/>
</dbReference>
<dbReference type="SMR" id="C4YBG0"/>
<dbReference type="FunCoup" id="C4YBG0">
    <property type="interactions" value="100"/>
</dbReference>
<dbReference type="STRING" id="306902.C4YBG0"/>
<dbReference type="GeneID" id="8495118"/>
<dbReference type="KEGG" id="clu:CLUG_05538"/>
<dbReference type="VEuPathDB" id="FungiDB:CLUG_05538"/>
<dbReference type="HOGENOM" id="CLU_050427_0_0_1"/>
<dbReference type="InParanoid" id="C4YBG0"/>
<dbReference type="OMA" id="GIVHECD"/>
<dbReference type="OrthoDB" id="119592at4891"/>
<dbReference type="Proteomes" id="UP000007703">
    <property type="component" value="Unassembled WGS sequence"/>
</dbReference>
<dbReference type="GO" id="GO:0005634">
    <property type="term" value="C:nucleus"/>
    <property type="evidence" value="ECO:0007669"/>
    <property type="project" value="UniProtKB-SubCell"/>
</dbReference>
<dbReference type="GO" id="GO:2000640">
    <property type="term" value="P:positive regulation of SREBP signaling pathway"/>
    <property type="evidence" value="ECO:0007669"/>
    <property type="project" value="TreeGrafter"/>
</dbReference>
<dbReference type="GO" id="GO:0006417">
    <property type="term" value="P:regulation of translation"/>
    <property type="evidence" value="ECO:0007669"/>
    <property type="project" value="UniProtKB-KW"/>
</dbReference>
<dbReference type="InterPro" id="IPR024318">
    <property type="entry name" value="Nro1/ETT1"/>
</dbReference>
<dbReference type="PANTHER" id="PTHR28290">
    <property type="entry name" value="ENHANCER OF TRANSLATION TERMINATION 1"/>
    <property type="match status" value="1"/>
</dbReference>
<dbReference type="PANTHER" id="PTHR28290:SF1">
    <property type="entry name" value="ENHANCER OF TRANSLATION TERMINATION 1"/>
    <property type="match status" value="1"/>
</dbReference>
<dbReference type="Pfam" id="PF12753">
    <property type="entry name" value="Nro1"/>
    <property type="match status" value="1"/>
</dbReference>
<organism>
    <name type="scientific">Clavispora lusitaniae (strain ATCC 42720)</name>
    <name type="common">Yeast</name>
    <name type="synonym">Candida lusitaniae</name>
    <dbReference type="NCBI Taxonomy" id="306902"/>
    <lineage>
        <taxon>Eukaryota</taxon>
        <taxon>Fungi</taxon>
        <taxon>Dikarya</taxon>
        <taxon>Ascomycota</taxon>
        <taxon>Saccharomycotina</taxon>
        <taxon>Pichiomycetes</taxon>
        <taxon>Metschnikowiaceae</taxon>
        <taxon>Clavispora</taxon>
    </lineage>
</organism>
<accession>C4YBG0</accession>
<gene>
    <name type="primary">ETT1</name>
    <name type="ORF">CLUG_05538</name>
</gene>
<reference key="1">
    <citation type="journal article" date="2009" name="Nature">
        <title>Evolution of pathogenicity and sexual reproduction in eight Candida genomes.</title>
        <authorList>
            <person name="Butler G."/>
            <person name="Rasmussen M.D."/>
            <person name="Lin M.F."/>
            <person name="Santos M.A.S."/>
            <person name="Sakthikumar S."/>
            <person name="Munro C.A."/>
            <person name="Rheinbay E."/>
            <person name="Grabherr M."/>
            <person name="Forche A."/>
            <person name="Reedy J.L."/>
            <person name="Agrafioti I."/>
            <person name="Arnaud M.B."/>
            <person name="Bates S."/>
            <person name="Brown A.J.P."/>
            <person name="Brunke S."/>
            <person name="Costanzo M.C."/>
            <person name="Fitzpatrick D.A."/>
            <person name="de Groot P.W.J."/>
            <person name="Harris D."/>
            <person name="Hoyer L.L."/>
            <person name="Hube B."/>
            <person name="Klis F.M."/>
            <person name="Kodira C."/>
            <person name="Lennard N."/>
            <person name="Logue M.E."/>
            <person name="Martin R."/>
            <person name="Neiman A.M."/>
            <person name="Nikolaou E."/>
            <person name="Quail M.A."/>
            <person name="Quinn J."/>
            <person name="Santos M.C."/>
            <person name="Schmitzberger F.F."/>
            <person name="Sherlock G."/>
            <person name="Shah P."/>
            <person name="Silverstein K.A.T."/>
            <person name="Skrzypek M.S."/>
            <person name="Soll D."/>
            <person name="Staggs R."/>
            <person name="Stansfield I."/>
            <person name="Stumpf M.P.H."/>
            <person name="Sudbery P.E."/>
            <person name="Srikantha T."/>
            <person name="Zeng Q."/>
            <person name="Berman J."/>
            <person name="Berriman M."/>
            <person name="Heitman J."/>
            <person name="Gow N.A.R."/>
            <person name="Lorenz M.C."/>
            <person name="Birren B.W."/>
            <person name="Kellis M."/>
            <person name="Cuomo C.A."/>
        </authorList>
    </citation>
    <scope>NUCLEOTIDE SEQUENCE [LARGE SCALE GENOMIC DNA]</scope>
    <source>
        <strain>ATCC 42720</strain>
    </source>
</reference>
<evidence type="ECO:0000250" key="1"/>
<evidence type="ECO:0000256" key="2">
    <source>
        <dbReference type="SAM" id="MobiDB-lite"/>
    </source>
</evidence>
<evidence type="ECO:0000305" key="3"/>